<organism>
    <name type="scientific">Staphylococcus saprophyticus subsp. saprophyticus (strain ATCC 15305 / DSM 20229 / NCIMB 8711 / NCTC 7292 / S-41)</name>
    <dbReference type="NCBI Taxonomy" id="342451"/>
    <lineage>
        <taxon>Bacteria</taxon>
        <taxon>Bacillati</taxon>
        <taxon>Bacillota</taxon>
        <taxon>Bacilli</taxon>
        <taxon>Bacillales</taxon>
        <taxon>Staphylococcaceae</taxon>
        <taxon>Staphylococcus</taxon>
    </lineage>
</organism>
<protein>
    <recommendedName>
        <fullName evidence="1">Large ribosomal subunit protein uL4</fullName>
    </recommendedName>
    <alternativeName>
        <fullName evidence="3">50S ribosomal protein L4</fullName>
    </alternativeName>
</protein>
<evidence type="ECO:0000255" key="1">
    <source>
        <dbReference type="HAMAP-Rule" id="MF_01328"/>
    </source>
</evidence>
<evidence type="ECO:0000256" key="2">
    <source>
        <dbReference type="SAM" id="MobiDB-lite"/>
    </source>
</evidence>
<evidence type="ECO:0000305" key="3"/>
<keyword id="KW-1185">Reference proteome</keyword>
<keyword id="KW-0687">Ribonucleoprotein</keyword>
<keyword id="KW-0689">Ribosomal protein</keyword>
<keyword id="KW-0694">RNA-binding</keyword>
<keyword id="KW-0699">rRNA-binding</keyword>
<reference key="1">
    <citation type="journal article" date="2005" name="Proc. Natl. Acad. Sci. U.S.A.">
        <title>Whole genome sequence of Staphylococcus saprophyticus reveals the pathogenesis of uncomplicated urinary tract infection.</title>
        <authorList>
            <person name="Kuroda M."/>
            <person name="Yamashita A."/>
            <person name="Hirakawa H."/>
            <person name="Kumano M."/>
            <person name="Morikawa K."/>
            <person name="Higashide M."/>
            <person name="Maruyama A."/>
            <person name="Inose Y."/>
            <person name="Matoba K."/>
            <person name="Toh H."/>
            <person name="Kuhara S."/>
            <person name="Hattori M."/>
            <person name="Ohta T."/>
        </authorList>
    </citation>
    <scope>NUCLEOTIDE SEQUENCE [LARGE SCALE GENOMIC DNA]</scope>
    <source>
        <strain>ATCC 15305 / DSM 20229 / NCIMB 8711 / NCTC 7292 / S-41</strain>
    </source>
</reference>
<accession>Q49ZG7</accession>
<gene>
    <name evidence="1" type="primary">rplD</name>
    <name type="ordered locus">SSP0664</name>
</gene>
<sequence length="207" mass="22441">MANYDVLKVDGTKSGSVELSDAVFAIEPNNNVLFEAINLQRASLRQGTHAVKNRSAVRGGGRKPWRQKGTGRARQGTIRAPQWRGGGIVFGPTPRSYSYKMPKKMRRLALRSALSFKVQEKGLTVVDALNLDAPKTKEFKTVLSNLEQPKKVLVVTESEDVNVALSARNIPGVQVTTAQGLNVLDITSADSVVITESAAKKVEEVLG</sequence>
<feature type="chain" id="PRO_0000129283" description="Large ribosomal subunit protein uL4">
    <location>
        <begin position="1"/>
        <end position="207"/>
    </location>
</feature>
<feature type="region of interest" description="Disordered" evidence="2">
    <location>
        <begin position="53"/>
        <end position="76"/>
    </location>
</feature>
<feature type="compositionally biased region" description="Basic residues" evidence="2">
    <location>
        <begin position="60"/>
        <end position="71"/>
    </location>
</feature>
<comment type="function">
    <text evidence="1">One of the primary rRNA binding proteins, this protein initially binds near the 5'-end of the 23S rRNA. It is important during the early stages of 50S assembly. It makes multiple contacts with different domains of the 23S rRNA in the assembled 50S subunit and ribosome.</text>
</comment>
<comment type="function">
    <text evidence="1">Forms part of the polypeptide exit tunnel.</text>
</comment>
<comment type="subunit">
    <text evidence="1">Part of the 50S ribosomal subunit.</text>
</comment>
<comment type="similarity">
    <text evidence="1">Belongs to the universal ribosomal protein uL4 family.</text>
</comment>
<name>RL4_STAS1</name>
<proteinExistence type="inferred from homology"/>
<dbReference type="EMBL" id="AP008934">
    <property type="protein sequence ID" value="BAE17809.1"/>
    <property type="molecule type" value="Genomic_DNA"/>
</dbReference>
<dbReference type="RefSeq" id="WP_002482613.1">
    <property type="nucleotide sequence ID" value="NZ_MTGA01000036.1"/>
</dbReference>
<dbReference type="SMR" id="Q49ZG7"/>
<dbReference type="GeneID" id="66866811"/>
<dbReference type="KEGG" id="ssp:SSP0664"/>
<dbReference type="eggNOG" id="COG0088">
    <property type="taxonomic scope" value="Bacteria"/>
</dbReference>
<dbReference type="HOGENOM" id="CLU_041575_5_2_9"/>
<dbReference type="OrthoDB" id="9803201at2"/>
<dbReference type="Proteomes" id="UP000006371">
    <property type="component" value="Chromosome"/>
</dbReference>
<dbReference type="GO" id="GO:1990904">
    <property type="term" value="C:ribonucleoprotein complex"/>
    <property type="evidence" value="ECO:0007669"/>
    <property type="project" value="UniProtKB-KW"/>
</dbReference>
<dbReference type="GO" id="GO:0005840">
    <property type="term" value="C:ribosome"/>
    <property type="evidence" value="ECO:0007669"/>
    <property type="project" value="UniProtKB-KW"/>
</dbReference>
<dbReference type="GO" id="GO:0019843">
    <property type="term" value="F:rRNA binding"/>
    <property type="evidence" value="ECO:0007669"/>
    <property type="project" value="UniProtKB-UniRule"/>
</dbReference>
<dbReference type="GO" id="GO:0003735">
    <property type="term" value="F:structural constituent of ribosome"/>
    <property type="evidence" value="ECO:0007669"/>
    <property type="project" value="InterPro"/>
</dbReference>
<dbReference type="GO" id="GO:0006412">
    <property type="term" value="P:translation"/>
    <property type="evidence" value="ECO:0007669"/>
    <property type="project" value="UniProtKB-UniRule"/>
</dbReference>
<dbReference type="FunFam" id="3.40.1370.10:FF:000003">
    <property type="entry name" value="50S ribosomal protein L4"/>
    <property type="match status" value="1"/>
</dbReference>
<dbReference type="Gene3D" id="3.40.1370.10">
    <property type="match status" value="1"/>
</dbReference>
<dbReference type="HAMAP" id="MF_01328_B">
    <property type="entry name" value="Ribosomal_uL4_B"/>
    <property type="match status" value="1"/>
</dbReference>
<dbReference type="InterPro" id="IPR002136">
    <property type="entry name" value="Ribosomal_uL4"/>
</dbReference>
<dbReference type="InterPro" id="IPR013005">
    <property type="entry name" value="Ribosomal_uL4-like"/>
</dbReference>
<dbReference type="InterPro" id="IPR023574">
    <property type="entry name" value="Ribosomal_uL4_dom_sf"/>
</dbReference>
<dbReference type="NCBIfam" id="TIGR03953">
    <property type="entry name" value="rplD_bact"/>
    <property type="match status" value="1"/>
</dbReference>
<dbReference type="PANTHER" id="PTHR10746">
    <property type="entry name" value="50S RIBOSOMAL PROTEIN L4"/>
    <property type="match status" value="1"/>
</dbReference>
<dbReference type="PANTHER" id="PTHR10746:SF6">
    <property type="entry name" value="LARGE RIBOSOMAL SUBUNIT PROTEIN UL4M"/>
    <property type="match status" value="1"/>
</dbReference>
<dbReference type="Pfam" id="PF00573">
    <property type="entry name" value="Ribosomal_L4"/>
    <property type="match status" value="1"/>
</dbReference>
<dbReference type="SUPFAM" id="SSF52166">
    <property type="entry name" value="Ribosomal protein L4"/>
    <property type="match status" value="1"/>
</dbReference>